<dbReference type="EMBL" id="DQ185017">
    <property type="protein sequence ID" value="ABB00656.1"/>
    <property type="molecule type" value="Genomic_DNA"/>
</dbReference>
<dbReference type="SMR" id="Q0H6L0"/>
<dbReference type="EnsemblMetazoa" id="XM_043802979.1">
    <property type="protein sequence ID" value="XP_043658914.1"/>
    <property type="gene ID" value="LOC122623691"/>
</dbReference>
<dbReference type="GO" id="GO:0022627">
    <property type="term" value="C:cytosolic small ribosomal subunit"/>
    <property type="evidence" value="ECO:0007669"/>
    <property type="project" value="UniProtKB-UniRule"/>
</dbReference>
<dbReference type="GO" id="GO:0005634">
    <property type="term" value="C:nucleus"/>
    <property type="evidence" value="ECO:0007669"/>
    <property type="project" value="UniProtKB-SubCell"/>
</dbReference>
<dbReference type="GO" id="GO:0003735">
    <property type="term" value="F:structural constituent of ribosome"/>
    <property type="evidence" value="ECO:0007669"/>
    <property type="project" value="UniProtKB-UniRule"/>
</dbReference>
<dbReference type="GO" id="GO:0000028">
    <property type="term" value="P:ribosomal small subunit assembly"/>
    <property type="evidence" value="ECO:0007669"/>
    <property type="project" value="UniProtKB-UniRule"/>
</dbReference>
<dbReference type="GO" id="GO:0006412">
    <property type="term" value="P:translation"/>
    <property type="evidence" value="ECO:0007669"/>
    <property type="project" value="UniProtKB-UniRule"/>
</dbReference>
<dbReference type="CDD" id="cd01425">
    <property type="entry name" value="RPS2"/>
    <property type="match status" value="1"/>
</dbReference>
<dbReference type="FunFam" id="3.40.50.10490:FF:000012">
    <property type="entry name" value="40S ribosomal protein SA"/>
    <property type="match status" value="1"/>
</dbReference>
<dbReference type="Gene3D" id="3.40.50.10490">
    <property type="entry name" value="Glucose-6-phosphate isomerase like protein, domain 1"/>
    <property type="match status" value="1"/>
</dbReference>
<dbReference type="HAMAP" id="MF_03015">
    <property type="entry name" value="Ribosomal_S2_euk"/>
    <property type="match status" value="1"/>
</dbReference>
<dbReference type="InterPro" id="IPR001865">
    <property type="entry name" value="Ribosomal_uS2"/>
</dbReference>
<dbReference type="InterPro" id="IPR032281">
    <property type="entry name" value="Ribosomal_uS2_C"/>
</dbReference>
<dbReference type="InterPro" id="IPR018130">
    <property type="entry name" value="Ribosomal_uS2_CS"/>
</dbReference>
<dbReference type="InterPro" id="IPR027498">
    <property type="entry name" value="Ribosomal_uS2_euk"/>
</dbReference>
<dbReference type="InterPro" id="IPR005707">
    <property type="entry name" value="Ribosomal_uS2_euk/arc"/>
</dbReference>
<dbReference type="InterPro" id="IPR023591">
    <property type="entry name" value="Ribosomal_uS2_flav_dom_sf"/>
</dbReference>
<dbReference type="NCBIfam" id="TIGR01012">
    <property type="entry name" value="uS2_euk_arch"/>
    <property type="match status" value="1"/>
</dbReference>
<dbReference type="PANTHER" id="PTHR11489">
    <property type="entry name" value="40S RIBOSOMAL PROTEIN SA"/>
    <property type="match status" value="1"/>
</dbReference>
<dbReference type="Pfam" id="PF16122">
    <property type="entry name" value="40S_SA_C"/>
    <property type="match status" value="1"/>
</dbReference>
<dbReference type="Pfam" id="PF00318">
    <property type="entry name" value="Ribosomal_S2"/>
    <property type="match status" value="2"/>
</dbReference>
<dbReference type="PRINTS" id="PR00395">
    <property type="entry name" value="RIBOSOMALS2"/>
</dbReference>
<dbReference type="SUPFAM" id="SSF52313">
    <property type="entry name" value="Ribosomal protein S2"/>
    <property type="match status" value="1"/>
</dbReference>
<dbReference type="PROSITE" id="PS00962">
    <property type="entry name" value="RIBOSOMAL_S2_1"/>
    <property type="match status" value="1"/>
</dbReference>
<dbReference type="PROSITE" id="PS00963">
    <property type="entry name" value="RIBOSOMAL_S2_2"/>
    <property type="match status" value="1"/>
</dbReference>
<feature type="initiator methionine" description="Removed" evidence="1">
    <location>
        <position position="1"/>
    </location>
</feature>
<feature type="chain" id="PRO_0000371588" description="Small ribosomal subunit protein uS2">
    <location>
        <begin position="2"/>
        <end position="270"/>
    </location>
</feature>
<feature type="region of interest" description="Disordered" evidence="2">
    <location>
        <begin position="251"/>
        <end position="270"/>
    </location>
</feature>
<feature type="compositionally biased region" description="Polar residues" evidence="2">
    <location>
        <begin position="261"/>
        <end position="270"/>
    </location>
</feature>
<name>RSSA_DROTE</name>
<reference key="1">
    <citation type="journal article" date="2006" name="Genetics">
        <title>Strong regional heterogeneity in base composition evolution on the Drosophila X chromosome.</title>
        <authorList>
            <person name="Ko W.-Y."/>
            <person name="Piao S."/>
            <person name="Akashi H."/>
        </authorList>
    </citation>
    <scope>NUCLEOTIDE SEQUENCE [GENOMIC DNA]</scope>
    <source>
        <strain>Tucson 14021-0257.00</strain>
    </source>
</reference>
<gene>
    <name evidence="1" type="primary">sta</name>
</gene>
<accession>Q0H6L0</accession>
<evidence type="ECO:0000255" key="1">
    <source>
        <dbReference type="HAMAP-Rule" id="MF_03015"/>
    </source>
</evidence>
<evidence type="ECO:0000256" key="2">
    <source>
        <dbReference type="SAM" id="MobiDB-lite"/>
    </source>
</evidence>
<evidence type="ECO:0000305" key="3"/>
<protein>
    <recommendedName>
        <fullName evidence="1">Small ribosomal subunit protein uS2</fullName>
    </recommendedName>
    <alternativeName>
        <fullName evidence="3">40S ribosomal protein SA</fullName>
    </alternativeName>
    <alternativeName>
        <fullName evidence="1">Protein stubarista</fullName>
    </alternativeName>
</protein>
<sequence>MSGGLDILSLKEDDITKMLVATTHLGSENVNFQMEQYVYKRRADGVNILNLGKTWEKLQLAARAIVAIDNPSDIFVISSRPIGQRAVLKFAKYTDTTPIAGRFTPGAFTNQIQPAFREPRLLVVTDPNTDHQPIMEASYVNIPVIAFTNTDSPLRYIDIAIPCNNKSAHSIGLMWWLLAREVLRLRGTISRSVEWPVVVDLFFYRDPEEAEKEEAAAKELLPPPKIEEAVDHPVEETTNWADEVAAETVGGVEDWNEDTVKTSWGSDGQF</sequence>
<proteinExistence type="inferred from homology"/>
<organism>
    <name type="scientific">Drosophila teissieri</name>
    <name type="common">Fruit fly</name>
    <dbReference type="NCBI Taxonomy" id="7243"/>
    <lineage>
        <taxon>Eukaryota</taxon>
        <taxon>Metazoa</taxon>
        <taxon>Ecdysozoa</taxon>
        <taxon>Arthropoda</taxon>
        <taxon>Hexapoda</taxon>
        <taxon>Insecta</taxon>
        <taxon>Pterygota</taxon>
        <taxon>Neoptera</taxon>
        <taxon>Endopterygota</taxon>
        <taxon>Diptera</taxon>
        <taxon>Brachycera</taxon>
        <taxon>Muscomorpha</taxon>
        <taxon>Ephydroidea</taxon>
        <taxon>Drosophilidae</taxon>
        <taxon>Drosophila</taxon>
        <taxon>Sophophora</taxon>
    </lineage>
</organism>
<comment type="function">
    <text evidence="1">Required for the assembly and/or stability of the 40S ribosomal subunit. Required for the processing of the 20S rRNA-precursor to mature 18S rRNA in a late step of the maturation of 40S ribosomal subunits. Required during oogenesis and imaginal development.</text>
</comment>
<comment type="subunit">
    <text evidence="1">Component of the small ribosomal subunit. Mature ribosomes consist of a small (40S) and a large (60S) subunit. The 40S subunit contains about 33 different proteins and 1 molecule of RNA (18S). The 60S subunit contains about 49 different proteins and 3 molecules of RNA (28S, 5.8S and 5S). Interacts with oho23B/rpS21.</text>
</comment>
<comment type="subcellular location">
    <subcellularLocation>
        <location evidence="1">Cytoplasm</location>
    </subcellularLocation>
    <subcellularLocation>
        <location evidence="1">Nucleus</location>
    </subcellularLocation>
    <text evidence="1">May associate with nascent RNP complexes within the nucleus.</text>
</comment>
<comment type="similarity">
    <text evidence="1">Belongs to the universal ribosomal protein uS2 family.</text>
</comment>
<keyword id="KW-0963">Cytoplasm</keyword>
<keyword id="KW-0217">Developmental protein</keyword>
<keyword id="KW-0539">Nucleus</keyword>
<keyword id="KW-0687">Ribonucleoprotein</keyword>
<keyword id="KW-0689">Ribosomal protein</keyword>